<protein>
    <recommendedName>
        <fullName evidence="4">Dolichol-phosphate mannose synthase subunit 3</fullName>
        <shortName evidence="4">DPM synthase subunit 3</shortName>
    </recommendedName>
    <alternativeName>
        <fullName evidence="3">Dol-P-Man synthase1</fullName>
    </alternativeName>
    <alternativeName>
        <fullName evidence="4">Dolichol phosphate-mannose biosynthesis regulatory protein</fullName>
    </alternativeName>
</protein>
<keyword id="KW-0256">Endoplasmic reticulum</keyword>
<keyword id="KW-0472">Membrane</keyword>
<keyword id="KW-1185">Reference proteome</keyword>
<keyword id="KW-0812">Transmembrane</keyword>
<keyword id="KW-1133">Transmembrane helix</keyword>
<comment type="function">
    <text evidence="2">Regulates the biosynthesis of dolichol phosphate-mannose. Regulatory subunit of the dolichol-phosphate mannose (DPM) synthase complex; essential for the ER localization and stable expression of DPMS1.</text>
</comment>
<comment type="pathway">
    <text evidence="4">Protein modification; protein glycosylation.</text>
</comment>
<comment type="subunit">
    <text evidence="2">Component of the dolichol-phosphate mannose (DPM) synthase complex composed of DPMS1, DPMS2 and DPMS3; in the complex interacts directly with DPMS1 and DPMS2.</text>
</comment>
<comment type="subcellular location">
    <subcellularLocation>
        <location evidence="2">Endoplasmic reticulum membrane</location>
        <topology evidence="1">Multi-pass membrane protein</topology>
    </subcellularLocation>
    <text evidence="2">May serve as regulatory subunit and membrane anchor for DPMS1.</text>
</comment>
<comment type="disruption phenotype">
    <text evidence="2">No visible phenotype under normal growth conditions.</text>
</comment>
<comment type="similarity">
    <text evidence="4">Belongs to the DPM3 family.</text>
</comment>
<comment type="sequence caution" evidence="4">
    <conflict type="erroneous gene model prediction">
        <sequence resource="EMBL-CDS" id="AAF79537"/>
    </conflict>
</comment>
<sequence>MKHIVKILSLLVAISAFWIGLLQAAIIPRSHTWLLPIYFVVSLGCYGLLMVGVGLMQFPTCPQEAVLLQKDIAEAKDFFKHKGVDVGSN</sequence>
<name>DPM3_ARATH</name>
<gene>
    <name evidence="3" type="primary">DPMS3</name>
    <name evidence="5" type="ordered locus">At1g48140</name>
    <name evidence="6" type="ORF">F21D18.14</name>
</gene>
<dbReference type="EMBL" id="AC023673">
    <property type="protein sequence ID" value="AAF79537.1"/>
    <property type="status" value="ALT_SEQ"/>
    <property type="molecule type" value="Genomic_DNA"/>
</dbReference>
<dbReference type="EMBL" id="CP002684">
    <property type="protein sequence ID" value="AEE32253.1"/>
    <property type="molecule type" value="Genomic_DNA"/>
</dbReference>
<dbReference type="EMBL" id="AK118069">
    <property type="protein sequence ID" value="BAC42700.1"/>
    <property type="molecule type" value="mRNA"/>
</dbReference>
<dbReference type="EMBL" id="BT005626">
    <property type="protein sequence ID" value="AAO64046.1"/>
    <property type="molecule type" value="mRNA"/>
</dbReference>
<dbReference type="EMBL" id="AY085296">
    <property type="protein sequence ID" value="AAM62528.1"/>
    <property type="molecule type" value="mRNA"/>
</dbReference>
<dbReference type="PIR" id="E96521">
    <property type="entry name" value="E96521"/>
</dbReference>
<dbReference type="RefSeq" id="NP_564521.1">
    <property type="nucleotide sequence ID" value="NM_103710.3"/>
</dbReference>
<dbReference type="SMR" id="Q8LEQ4"/>
<dbReference type="FunCoup" id="Q8LEQ4">
    <property type="interactions" value="1186"/>
</dbReference>
<dbReference type="IntAct" id="Q8LEQ4">
    <property type="interactions" value="4"/>
</dbReference>
<dbReference type="STRING" id="3702.Q8LEQ4"/>
<dbReference type="PaxDb" id="3702-AT1G48140.1"/>
<dbReference type="EnsemblPlants" id="AT1G48140.1">
    <property type="protein sequence ID" value="AT1G48140.1"/>
    <property type="gene ID" value="AT1G48140"/>
</dbReference>
<dbReference type="GeneID" id="841232"/>
<dbReference type="Gramene" id="AT1G48140.1">
    <property type="protein sequence ID" value="AT1G48140.1"/>
    <property type="gene ID" value="AT1G48140"/>
</dbReference>
<dbReference type="KEGG" id="ath:AT1G48140"/>
<dbReference type="Araport" id="AT1G48140"/>
<dbReference type="TAIR" id="AT1G48140">
    <property type="gene designation" value="DPMS3"/>
</dbReference>
<dbReference type="eggNOG" id="ENOG502S473">
    <property type="taxonomic scope" value="Eukaryota"/>
</dbReference>
<dbReference type="HOGENOM" id="CLU_170636_0_0_1"/>
<dbReference type="InParanoid" id="Q8LEQ4"/>
<dbReference type="OMA" id="IPQSHTW"/>
<dbReference type="OrthoDB" id="2014333at2759"/>
<dbReference type="PhylomeDB" id="Q8LEQ4"/>
<dbReference type="BioCyc" id="ARA:AT1G48140-MONOMER"/>
<dbReference type="BioCyc" id="MetaCyc:AT1G48140-MONOMER"/>
<dbReference type="UniPathway" id="UPA00378"/>
<dbReference type="PRO" id="PR:Q8LEQ4"/>
<dbReference type="Proteomes" id="UP000006548">
    <property type="component" value="Chromosome 1"/>
</dbReference>
<dbReference type="ExpressionAtlas" id="Q8LEQ4">
    <property type="expression patterns" value="baseline and differential"/>
</dbReference>
<dbReference type="GO" id="GO:0033185">
    <property type="term" value="C:dolichol-phosphate-mannose synthase complex"/>
    <property type="evidence" value="ECO:0000353"/>
    <property type="project" value="TAIR"/>
</dbReference>
<dbReference type="GO" id="GO:0005783">
    <property type="term" value="C:endoplasmic reticulum"/>
    <property type="evidence" value="ECO:0000314"/>
    <property type="project" value="TAIR"/>
</dbReference>
<dbReference type="GO" id="GO:0005789">
    <property type="term" value="C:endoplasmic reticulum membrane"/>
    <property type="evidence" value="ECO:0007669"/>
    <property type="project" value="UniProtKB-SubCell"/>
</dbReference>
<dbReference type="GO" id="GO:0006486">
    <property type="term" value="P:protein glycosylation"/>
    <property type="evidence" value="ECO:0007669"/>
    <property type="project" value="UniProtKB-UniPathway"/>
</dbReference>
<dbReference type="InterPro" id="IPR013174">
    <property type="entry name" value="DPM3"/>
</dbReference>
<dbReference type="PANTHER" id="PTHR16433">
    <property type="entry name" value="DOLICHOL-PHOSPHATE MANNOSYLTRANSFERASE SUBUNIT 3"/>
    <property type="match status" value="1"/>
</dbReference>
<dbReference type="PANTHER" id="PTHR16433:SF0">
    <property type="entry name" value="DOLICHOL-PHOSPHATE MANNOSYLTRANSFERASE SUBUNIT 3"/>
    <property type="match status" value="1"/>
</dbReference>
<dbReference type="Pfam" id="PF08285">
    <property type="entry name" value="DPM3"/>
    <property type="match status" value="1"/>
</dbReference>
<reference key="1">
    <citation type="journal article" date="2000" name="Nature">
        <title>Sequence and analysis of chromosome 1 of the plant Arabidopsis thaliana.</title>
        <authorList>
            <person name="Theologis A."/>
            <person name="Ecker J.R."/>
            <person name="Palm C.J."/>
            <person name="Federspiel N.A."/>
            <person name="Kaul S."/>
            <person name="White O."/>
            <person name="Alonso J."/>
            <person name="Altafi H."/>
            <person name="Araujo R."/>
            <person name="Bowman C.L."/>
            <person name="Brooks S.Y."/>
            <person name="Buehler E."/>
            <person name="Chan A."/>
            <person name="Chao Q."/>
            <person name="Chen H."/>
            <person name="Cheuk R.F."/>
            <person name="Chin C.W."/>
            <person name="Chung M.K."/>
            <person name="Conn L."/>
            <person name="Conway A.B."/>
            <person name="Conway A.R."/>
            <person name="Creasy T.H."/>
            <person name="Dewar K."/>
            <person name="Dunn P."/>
            <person name="Etgu P."/>
            <person name="Feldblyum T.V."/>
            <person name="Feng J.-D."/>
            <person name="Fong B."/>
            <person name="Fujii C.Y."/>
            <person name="Gill J.E."/>
            <person name="Goldsmith A.D."/>
            <person name="Haas B."/>
            <person name="Hansen N.F."/>
            <person name="Hughes B."/>
            <person name="Huizar L."/>
            <person name="Hunter J.L."/>
            <person name="Jenkins J."/>
            <person name="Johnson-Hopson C."/>
            <person name="Khan S."/>
            <person name="Khaykin E."/>
            <person name="Kim C.J."/>
            <person name="Koo H.L."/>
            <person name="Kremenetskaia I."/>
            <person name="Kurtz D.B."/>
            <person name="Kwan A."/>
            <person name="Lam B."/>
            <person name="Langin-Hooper S."/>
            <person name="Lee A."/>
            <person name="Lee J.M."/>
            <person name="Lenz C.A."/>
            <person name="Li J.H."/>
            <person name="Li Y.-P."/>
            <person name="Lin X."/>
            <person name="Liu S.X."/>
            <person name="Liu Z.A."/>
            <person name="Luros J.S."/>
            <person name="Maiti R."/>
            <person name="Marziali A."/>
            <person name="Militscher J."/>
            <person name="Miranda M."/>
            <person name="Nguyen M."/>
            <person name="Nierman W.C."/>
            <person name="Osborne B.I."/>
            <person name="Pai G."/>
            <person name="Peterson J."/>
            <person name="Pham P.K."/>
            <person name="Rizzo M."/>
            <person name="Rooney T."/>
            <person name="Rowley D."/>
            <person name="Sakano H."/>
            <person name="Salzberg S.L."/>
            <person name="Schwartz J.R."/>
            <person name="Shinn P."/>
            <person name="Southwick A.M."/>
            <person name="Sun H."/>
            <person name="Tallon L.J."/>
            <person name="Tambunga G."/>
            <person name="Toriumi M.J."/>
            <person name="Town C.D."/>
            <person name="Utterback T."/>
            <person name="Van Aken S."/>
            <person name="Vaysberg M."/>
            <person name="Vysotskaia V.S."/>
            <person name="Walker M."/>
            <person name="Wu D."/>
            <person name="Yu G."/>
            <person name="Fraser C.M."/>
            <person name="Venter J.C."/>
            <person name="Davis R.W."/>
        </authorList>
    </citation>
    <scope>NUCLEOTIDE SEQUENCE [LARGE SCALE GENOMIC DNA]</scope>
    <source>
        <strain>cv. Columbia</strain>
    </source>
</reference>
<reference key="2">
    <citation type="journal article" date="2017" name="Plant J.">
        <title>Araport11: a complete reannotation of the Arabidopsis thaliana reference genome.</title>
        <authorList>
            <person name="Cheng C.Y."/>
            <person name="Krishnakumar V."/>
            <person name="Chan A.P."/>
            <person name="Thibaud-Nissen F."/>
            <person name="Schobel S."/>
            <person name="Town C.D."/>
        </authorList>
    </citation>
    <scope>GENOME REANNOTATION</scope>
    <source>
        <strain>cv. Columbia</strain>
    </source>
</reference>
<reference key="3">
    <citation type="journal article" date="2002" name="Science">
        <title>Functional annotation of a full-length Arabidopsis cDNA collection.</title>
        <authorList>
            <person name="Seki M."/>
            <person name="Narusaka M."/>
            <person name="Kamiya A."/>
            <person name="Ishida J."/>
            <person name="Satou M."/>
            <person name="Sakurai T."/>
            <person name="Nakajima M."/>
            <person name="Enju A."/>
            <person name="Akiyama K."/>
            <person name="Oono Y."/>
            <person name="Muramatsu M."/>
            <person name="Hayashizaki Y."/>
            <person name="Kawai J."/>
            <person name="Carninci P."/>
            <person name="Itoh M."/>
            <person name="Ishii Y."/>
            <person name="Arakawa T."/>
            <person name="Shibata K."/>
            <person name="Shinagawa A."/>
            <person name="Shinozaki K."/>
        </authorList>
    </citation>
    <scope>NUCLEOTIDE SEQUENCE [LARGE SCALE MRNA]</scope>
    <source>
        <strain>cv. Columbia</strain>
    </source>
</reference>
<reference key="4">
    <citation type="journal article" date="2003" name="Science">
        <title>Empirical analysis of transcriptional activity in the Arabidopsis genome.</title>
        <authorList>
            <person name="Yamada K."/>
            <person name="Lim J."/>
            <person name="Dale J.M."/>
            <person name="Chen H."/>
            <person name="Shinn P."/>
            <person name="Palm C.J."/>
            <person name="Southwick A.M."/>
            <person name="Wu H.C."/>
            <person name="Kim C.J."/>
            <person name="Nguyen M."/>
            <person name="Pham P.K."/>
            <person name="Cheuk R.F."/>
            <person name="Karlin-Newmann G."/>
            <person name="Liu S.X."/>
            <person name="Lam B."/>
            <person name="Sakano H."/>
            <person name="Wu T."/>
            <person name="Yu G."/>
            <person name="Miranda M."/>
            <person name="Quach H.L."/>
            <person name="Tripp M."/>
            <person name="Chang C.H."/>
            <person name="Lee J.M."/>
            <person name="Toriumi M.J."/>
            <person name="Chan M.M."/>
            <person name="Tang C.C."/>
            <person name="Onodera C.S."/>
            <person name="Deng J.M."/>
            <person name="Akiyama K."/>
            <person name="Ansari Y."/>
            <person name="Arakawa T."/>
            <person name="Banh J."/>
            <person name="Banno F."/>
            <person name="Bowser L."/>
            <person name="Brooks S.Y."/>
            <person name="Carninci P."/>
            <person name="Chao Q."/>
            <person name="Choy N."/>
            <person name="Enju A."/>
            <person name="Goldsmith A.D."/>
            <person name="Gurjal M."/>
            <person name="Hansen N.F."/>
            <person name="Hayashizaki Y."/>
            <person name="Johnson-Hopson C."/>
            <person name="Hsuan V.W."/>
            <person name="Iida K."/>
            <person name="Karnes M."/>
            <person name="Khan S."/>
            <person name="Koesema E."/>
            <person name="Ishida J."/>
            <person name="Jiang P.X."/>
            <person name="Jones T."/>
            <person name="Kawai J."/>
            <person name="Kamiya A."/>
            <person name="Meyers C."/>
            <person name="Nakajima M."/>
            <person name="Narusaka M."/>
            <person name="Seki M."/>
            <person name="Sakurai T."/>
            <person name="Satou M."/>
            <person name="Tamse R."/>
            <person name="Vaysberg M."/>
            <person name="Wallender E.K."/>
            <person name="Wong C."/>
            <person name="Yamamura Y."/>
            <person name="Yuan S."/>
            <person name="Shinozaki K."/>
            <person name="Davis R.W."/>
            <person name="Theologis A."/>
            <person name="Ecker J.R."/>
        </authorList>
    </citation>
    <scope>NUCLEOTIDE SEQUENCE [LARGE SCALE MRNA]</scope>
    <source>
        <strain>cv. Columbia</strain>
    </source>
</reference>
<reference key="5">
    <citation type="submission" date="2002-03" db="EMBL/GenBank/DDBJ databases">
        <title>Full-length cDNA from Arabidopsis thaliana.</title>
        <authorList>
            <person name="Brover V.V."/>
            <person name="Troukhan M.E."/>
            <person name="Alexandrov N.A."/>
            <person name="Lu Y.-P."/>
            <person name="Flavell R.B."/>
            <person name="Feldmann K.A."/>
        </authorList>
    </citation>
    <scope>NUCLEOTIDE SEQUENCE [LARGE SCALE MRNA]</scope>
</reference>
<reference key="6">
    <citation type="journal article" date="2011" name="Plant Cell">
        <title>DOLICHOL PHOSPHATE MANNOSE SYNTHASE1 mediates the biogenesis of isoprenyl-linked glycans and influences development, stress response, and ammonium hypersensitivity in Arabidopsis.</title>
        <authorList>
            <person name="Jadid N."/>
            <person name="Mialoundama A.S."/>
            <person name="Heintz D."/>
            <person name="Ayoub D."/>
            <person name="Erhardt M."/>
            <person name="Mutterer J."/>
            <person name="Meyer D."/>
            <person name="Alioua A."/>
            <person name="Van Dorsselaer A."/>
            <person name="Rahier A."/>
            <person name="Camara B."/>
            <person name="Bouvier F."/>
        </authorList>
    </citation>
    <scope>FUNCTION</scope>
    <scope>IDENTIFICATION BY MASS SPECTROMETRY</scope>
    <scope>CATALYTIC ACTIVITY</scope>
    <scope>SUBCELLULAR LOCATION</scope>
    <scope>DISRUPTION PHENOTYPE</scope>
</reference>
<organism>
    <name type="scientific">Arabidopsis thaliana</name>
    <name type="common">Mouse-ear cress</name>
    <dbReference type="NCBI Taxonomy" id="3702"/>
    <lineage>
        <taxon>Eukaryota</taxon>
        <taxon>Viridiplantae</taxon>
        <taxon>Streptophyta</taxon>
        <taxon>Embryophyta</taxon>
        <taxon>Tracheophyta</taxon>
        <taxon>Spermatophyta</taxon>
        <taxon>Magnoliopsida</taxon>
        <taxon>eudicotyledons</taxon>
        <taxon>Gunneridae</taxon>
        <taxon>Pentapetalae</taxon>
        <taxon>rosids</taxon>
        <taxon>malvids</taxon>
        <taxon>Brassicales</taxon>
        <taxon>Brassicaceae</taxon>
        <taxon>Camelineae</taxon>
        <taxon>Arabidopsis</taxon>
    </lineage>
</organism>
<evidence type="ECO:0000255" key="1"/>
<evidence type="ECO:0000269" key="2">
    <source>
    </source>
</evidence>
<evidence type="ECO:0000303" key="3">
    <source>
    </source>
</evidence>
<evidence type="ECO:0000305" key="4"/>
<evidence type="ECO:0000312" key="5">
    <source>
        <dbReference type="Araport" id="AT1G48140"/>
    </source>
</evidence>
<evidence type="ECO:0000312" key="6">
    <source>
        <dbReference type="EMBL" id="AAF79537.1"/>
    </source>
</evidence>
<proteinExistence type="evidence at protein level"/>
<feature type="chain" id="PRO_0000440171" description="Dolichol-phosphate mannose synthase subunit 3">
    <location>
        <begin position="1"/>
        <end position="89"/>
    </location>
</feature>
<feature type="transmembrane region" description="Helical" evidence="1">
    <location>
        <begin position="7"/>
        <end position="27"/>
    </location>
</feature>
<feature type="transmembrane region" description="Helical" evidence="1">
    <location>
        <begin position="33"/>
        <end position="53"/>
    </location>
</feature>
<accession>Q8LEQ4</accession>
<accession>Q9LNG6</accession>